<evidence type="ECO:0000250" key="1"/>
<evidence type="ECO:0000250" key="2">
    <source>
        <dbReference type="UniProtKB" id="P00157"/>
    </source>
</evidence>
<evidence type="ECO:0000255" key="3">
    <source>
        <dbReference type="PROSITE-ProRule" id="PRU00967"/>
    </source>
</evidence>
<evidence type="ECO:0000255" key="4">
    <source>
        <dbReference type="PROSITE-ProRule" id="PRU00968"/>
    </source>
</evidence>
<geneLocation type="mitochondrion"/>
<keyword id="KW-0249">Electron transport</keyword>
<keyword id="KW-0349">Heme</keyword>
<keyword id="KW-0408">Iron</keyword>
<keyword id="KW-0472">Membrane</keyword>
<keyword id="KW-0479">Metal-binding</keyword>
<keyword id="KW-0496">Mitochondrion</keyword>
<keyword id="KW-0999">Mitochondrion inner membrane</keyword>
<keyword id="KW-0679">Respiratory chain</keyword>
<keyword id="KW-0812">Transmembrane</keyword>
<keyword id="KW-1133">Transmembrane helix</keyword>
<keyword id="KW-0813">Transport</keyword>
<keyword id="KW-0830">Ubiquinone</keyword>
<sequence length="379" mass="42827">MTNIRKTHPLMKIINNALIDLPAPSNISSWWNFGSLLGLCLIMQILTGLFLAMHYTPDTSTAFSSVTHICRDVNYGWIIRYLHANGASMFFICLYIHIGRGLYYGSYMFQETWNIGVLLLLMVMATAFVGYVLPWGQMSFWGATVITNLLSAIPYIGSTLVEWIWGGFSVDKATLTRFFAFHFILPFIITALMIVHLLFLHETGSNNPTGIPSNMDMIPFHPYYTIKDILGILLLILTLLTLTLFSPDLLGDPDNYVPANPLSTPAHIKPEWYFLFAYAILRSIPNKLGGVLALLLSILILVLVPMLQTSKQRSMMFRPFSQLLFWTLIADLLTLTWIGGQPVEHPYIIVGQLASILYFLLILVLMPTASIIENKLLKW</sequence>
<reference key="1">
    <citation type="journal article" date="2001" name="Proc. R. Soc. B">
        <title>Evolution of river dolphins.</title>
        <authorList>
            <person name="Hamilton H."/>
            <person name="Caballero S."/>
            <person name="Collins A.G."/>
            <person name="Brownell R.L. Jr."/>
        </authorList>
    </citation>
    <scope>NUCLEOTIDE SEQUENCE [GENOMIC DNA]</scope>
</reference>
<comment type="function">
    <text evidence="2">Component of the ubiquinol-cytochrome c reductase complex (complex III or cytochrome b-c1 complex) that is part of the mitochondrial respiratory chain. The b-c1 complex mediates electron transfer from ubiquinol to cytochrome c. Contributes to the generation of a proton gradient across the mitochondrial membrane that is then used for ATP synthesis.</text>
</comment>
<comment type="cofactor">
    <cofactor evidence="2">
        <name>heme b</name>
        <dbReference type="ChEBI" id="CHEBI:60344"/>
    </cofactor>
    <text evidence="2">Binds 2 heme b groups non-covalently.</text>
</comment>
<comment type="subunit">
    <text evidence="2">The cytochrome bc1 complex contains 11 subunits: 3 respiratory subunits (MT-CYB, CYC1 and UQCRFS1), 2 core proteins (UQCRC1 and UQCRC2) and 6 low-molecular weight proteins (UQCRH/QCR6, UQCRB/QCR7, UQCRQ/QCR8, UQCR10/QCR9, UQCR11/QCR10 and a cleavage product of UQCRFS1). This cytochrome bc1 complex then forms a dimer.</text>
</comment>
<comment type="subcellular location">
    <subcellularLocation>
        <location evidence="2">Mitochondrion inner membrane</location>
        <topology evidence="2">Multi-pass membrane protein</topology>
    </subcellularLocation>
</comment>
<comment type="miscellaneous">
    <text evidence="1">Heme 1 (or BL or b562) is low-potential and absorbs at about 562 nm, and heme 2 (or BH or b566) is high-potential and absorbs at about 566 nm.</text>
</comment>
<comment type="similarity">
    <text evidence="3 4">Belongs to the cytochrome b family.</text>
</comment>
<comment type="caution">
    <text evidence="2">The full-length protein contains only eight transmembrane helices, not nine as predicted by bioinformatics tools.</text>
</comment>
<name>CYB_NEOPH</name>
<feature type="chain" id="PRO_0000061272" description="Cytochrome b">
    <location>
        <begin position="1"/>
        <end position="379"/>
    </location>
</feature>
<feature type="transmembrane region" description="Helical" evidence="2">
    <location>
        <begin position="33"/>
        <end position="53"/>
    </location>
</feature>
<feature type="transmembrane region" description="Helical" evidence="2">
    <location>
        <begin position="77"/>
        <end position="98"/>
    </location>
</feature>
<feature type="transmembrane region" description="Helical" evidence="2">
    <location>
        <begin position="113"/>
        <end position="133"/>
    </location>
</feature>
<feature type="transmembrane region" description="Helical" evidence="2">
    <location>
        <begin position="178"/>
        <end position="198"/>
    </location>
</feature>
<feature type="transmembrane region" description="Helical" evidence="2">
    <location>
        <begin position="226"/>
        <end position="246"/>
    </location>
</feature>
<feature type="transmembrane region" description="Helical" evidence="2">
    <location>
        <begin position="288"/>
        <end position="308"/>
    </location>
</feature>
<feature type="transmembrane region" description="Helical" evidence="2">
    <location>
        <begin position="320"/>
        <end position="340"/>
    </location>
</feature>
<feature type="transmembrane region" description="Helical" evidence="2">
    <location>
        <begin position="347"/>
        <end position="367"/>
    </location>
</feature>
<feature type="binding site" description="axial binding residue" evidence="2">
    <location>
        <position position="83"/>
    </location>
    <ligand>
        <name>heme b</name>
        <dbReference type="ChEBI" id="CHEBI:60344"/>
        <label>b562</label>
    </ligand>
    <ligandPart>
        <name>Fe</name>
        <dbReference type="ChEBI" id="CHEBI:18248"/>
    </ligandPart>
</feature>
<feature type="binding site" description="axial binding residue" evidence="2">
    <location>
        <position position="97"/>
    </location>
    <ligand>
        <name>heme b</name>
        <dbReference type="ChEBI" id="CHEBI:60344"/>
        <label>b566</label>
    </ligand>
    <ligandPart>
        <name>Fe</name>
        <dbReference type="ChEBI" id="CHEBI:18248"/>
    </ligandPart>
</feature>
<feature type="binding site" description="axial binding residue" evidence="2">
    <location>
        <position position="182"/>
    </location>
    <ligand>
        <name>heme b</name>
        <dbReference type="ChEBI" id="CHEBI:60344"/>
        <label>b562</label>
    </ligand>
    <ligandPart>
        <name>Fe</name>
        <dbReference type="ChEBI" id="CHEBI:18248"/>
    </ligandPart>
</feature>
<feature type="binding site" description="axial binding residue" evidence="2">
    <location>
        <position position="196"/>
    </location>
    <ligand>
        <name>heme b</name>
        <dbReference type="ChEBI" id="CHEBI:60344"/>
        <label>b566</label>
    </ligand>
    <ligandPart>
        <name>Fe</name>
        <dbReference type="ChEBI" id="CHEBI:18248"/>
    </ligandPart>
</feature>
<feature type="binding site" evidence="2">
    <location>
        <position position="201"/>
    </location>
    <ligand>
        <name>a ubiquinone</name>
        <dbReference type="ChEBI" id="CHEBI:16389"/>
    </ligand>
</feature>
<protein>
    <recommendedName>
        <fullName>Cytochrome b</fullName>
    </recommendedName>
    <alternativeName>
        <fullName>Complex III subunit 3</fullName>
    </alternativeName>
    <alternativeName>
        <fullName>Complex III subunit III</fullName>
    </alternativeName>
    <alternativeName>
        <fullName>Cytochrome b-c1 complex subunit 3</fullName>
    </alternativeName>
    <alternativeName>
        <fullName>Ubiquinol-cytochrome-c reductase complex cytochrome b subunit</fullName>
    </alternativeName>
</protein>
<organism>
    <name type="scientific">Neophocaena phocaenoides</name>
    <name type="common">Finless porpoise</name>
    <name type="synonym">Delphinus phocaenoides</name>
    <dbReference type="NCBI Taxonomy" id="34892"/>
    <lineage>
        <taxon>Eukaryota</taxon>
        <taxon>Metazoa</taxon>
        <taxon>Chordata</taxon>
        <taxon>Craniata</taxon>
        <taxon>Vertebrata</taxon>
        <taxon>Euteleostomi</taxon>
        <taxon>Mammalia</taxon>
        <taxon>Eutheria</taxon>
        <taxon>Laurasiatheria</taxon>
        <taxon>Artiodactyla</taxon>
        <taxon>Whippomorpha</taxon>
        <taxon>Cetacea</taxon>
        <taxon>Odontoceti</taxon>
        <taxon>Phocoenidae</taxon>
        <taxon>Neophocaena</taxon>
    </lineage>
</organism>
<gene>
    <name type="primary">MT-CYB</name>
    <name type="synonym">COB</name>
    <name type="synonym">CYTB</name>
    <name type="synonym">MTCYB</name>
</gene>
<proteinExistence type="inferred from homology"/>
<accession>Q9B7V7</accession>
<dbReference type="EMBL" id="AF334489">
    <property type="protein sequence ID" value="AAK01730.1"/>
    <property type="molecule type" value="Genomic_DNA"/>
</dbReference>
<dbReference type="RefSeq" id="YP_008082933.1">
    <property type="nucleotide sequence ID" value="NC_021461.1"/>
</dbReference>
<dbReference type="SMR" id="Q9B7V7"/>
<dbReference type="GeneID" id="15825168"/>
<dbReference type="CTD" id="4519"/>
<dbReference type="GO" id="GO:0005743">
    <property type="term" value="C:mitochondrial inner membrane"/>
    <property type="evidence" value="ECO:0007669"/>
    <property type="project" value="UniProtKB-SubCell"/>
</dbReference>
<dbReference type="GO" id="GO:0045275">
    <property type="term" value="C:respiratory chain complex III"/>
    <property type="evidence" value="ECO:0007669"/>
    <property type="project" value="InterPro"/>
</dbReference>
<dbReference type="GO" id="GO:0046872">
    <property type="term" value="F:metal ion binding"/>
    <property type="evidence" value="ECO:0007669"/>
    <property type="project" value="UniProtKB-KW"/>
</dbReference>
<dbReference type="GO" id="GO:0008121">
    <property type="term" value="F:ubiquinol-cytochrome-c reductase activity"/>
    <property type="evidence" value="ECO:0007669"/>
    <property type="project" value="InterPro"/>
</dbReference>
<dbReference type="GO" id="GO:0006122">
    <property type="term" value="P:mitochondrial electron transport, ubiquinol to cytochrome c"/>
    <property type="evidence" value="ECO:0007669"/>
    <property type="project" value="TreeGrafter"/>
</dbReference>
<dbReference type="CDD" id="cd00290">
    <property type="entry name" value="cytochrome_b_C"/>
    <property type="match status" value="1"/>
</dbReference>
<dbReference type="CDD" id="cd00284">
    <property type="entry name" value="Cytochrome_b_N"/>
    <property type="match status" value="1"/>
</dbReference>
<dbReference type="FunFam" id="1.20.810.10:FF:000002">
    <property type="entry name" value="Cytochrome b"/>
    <property type="match status" value="1"/>
</dbReference>
<dbReference type="Gene3D" id="1.20.810.10">
    <property type="entry name" value="Cytochrome Bc1 Complex, Chain C"/>
    <property type="match status" value="1"/>
</dbReference>
<dbReference type="InterPro" id="IPR005798">
    <property type="entry name" value="Cyt_b/b6_C"/>
</dbReference>
<dbReference type="InterPro" id="IPR036150">
    <property type="entry name" value="Cyt_b/b6_C_sf"/>
</dbReference>
<dbReference type="InterPro" id="IPR005797">
    <property type="entry name" value="Cyt_b/b6_N"/>
</dbReference>
<dbReference type="InterPro" id="IPR027387">
    <property type="entry name" value="Cytb/b6-like_sf"/>
</dbReference>
<dbReference type="InterPro" id="IPR030689">
    <property type="entry name" value="Cytochrome_b"/>
</dbReference>
<dbReference type="InterPro" id="IPR048260">
    <property type="entry name" value="Cytochrome_b_C_euk/bac"/>
</dbReference>
<dbReference type="InterPro" id="IPR048259">
    <property type="entry name" value="Cytochrome_b_N_euk/bac"/>
</dbReference>
<dbReference type="InterPro" id="IPR016174">
    <property type="entry name" value="Di-haem_cyt_TM"/>
</dbReference>
<dbReference type="PANTHER" id="PTHR19271">
    <property type="entry name" value="CYTOCHROME B"/>
    <property type="match status" value="1"/>
</dbReference>
<dbReference type="PANTHER" id="PTHR19271:SF16">
    <property type="entry name" value="CYTOCHROME B"/>
    <property type="match status" value="1"/>
</dbReference>
<dbReference type="Pfam" id="PF00032">
    <property type="entry name" value="Cytochrom_B_C"/>
    <property type="match status" value="1"/>
</dbReference>
<dbReference type="Pfam" id="PF00033">
    <property type="entry name" value="Cytochrome_B"/>
    <property type="match status" value="1"/>
</dbReference>
<dbReference type="PIRSF" id="PIRSF038885">
    <property type="entry name" value="COB"/>
    <property type="match status" value="1"/>
</dbReference>
<dbReference type="SUPFAM" id="SSF81648">
    <property type="entry name" value="a domain/subunit of cytochrome bc1 complex (Ubiquinol-cytochrome c reductase)"/>
    <property type="match status" value="1"/>
</dbReference>
<dbReference type="SUPFAM" id="SSF81342">
    <property type="entry name" value="Transmembrane di-heme cytochromes"/>
    <property type="match status" value="1"/>
</dbReference>
<dbReference type="PROSITE" id="PS51003">
    <property type="entry name" value="CYTB_CTER"/>
    <property type="match status" value="1"/>
</dbReference>
<dbReference type="PROSITE" id="PS51002">
    <property type="entry name" value="CYTB_NTER"/>
    <property type="match status" value="1"/>
</dbReference>